<organism>
    <name type="scientific">Yersinia pestis (strain Pestoides F)</name>
    <dbReference type="NCBI Taxonomy" id="386656"/>
    <lineage>
        <taxon>Bacteria</taxon>
        <taxon>Pseudomonadati</taxon>
        <taxon>Pseudomonadota</taxon>
        <taxon>Gammaproteobacteria</taxon>
        <taxon>Enterobacterales</taxon>
        <taxon>Yersiniaceae</taxon>
        <taxon>Yersinia</taxon>
    </lineage>
</organism>
<name>METK_YERPP</name>
<comment type="function">
    <text evidence="1">Catalyzes the formation of S-adenosylmethionine (AdoMet) from methionine and ATP. The overall synthetic reaction is composed of two sequential steps, AdoMet formation and the subsequent tripolyphosphate hydrolysis which occurs prior to release of AdoMet from the enzyme.</text>
</comment>
<comment type="catalytic activity">
    <reaction evidence="1">
        <text>L-methionine + ATP + H2O = S-adenosyl-L-methionine + phosphate + diphosphate</text>
        <dbReference type="Rhea" id="RHEA:21080"/>
        <dbReference type="ChEBI" id="CHEBI:15377"/>
        <dbReference type="ChEBI" id="CHEBI:30616"/>
        <dbReference type="ChEBI" id="CHEBI:33019"/>
        <dbReference type="ChEBI" id="CHEBI:43474"/>
        <dbReference type="ChEBI" id="CHEBI:57844"/>
        <dbReference type="ChEBI" id="CHEBI:59789"/>
        <dbReference type="EC" id="2.5.1.6"/>
    </reaction>
</comment>
<comment type="cofactor">
    <cofactor evidence="1">
        <name>Mg(2+)</name>
        <dbReference type="ChEBI" id="CHEBI:18420"/>
    </cofactor>
    <text evidence="1">Binds 2 divalent ions per subunit.</text>
</comment>
<comment type="cofactor">
    <cofactor evidence="1">
        <name>K(+)</name>
        <dbReference type="ChEBI" id="CHEBI:29103"/>
    </cofactor>
    <text evidence="1">Binds 1 potassium ion per subunit.</text>
</comment>
<comment type="pathway">
    <text evidence="1">Amino-acid biosynthesis; S-adenosyl-L-methionine biosynthesis; S-adenosyl-L-methionine from L-methionine: step 1/1.</text>
</comment>
<comment type="subunit">
    <text evidence="1">Homotetramer; dimer of dimers.</text>
</comment>
<comment type="subcellular location">
    <subcellularLocation>
        <location evidence="1">Cytoplasm</location>
    </subcellularLocation>
</comment>
<comment type="similarity">
    <text evidence="1">Belongs to the AdoMet synthase family.</text>
</comment>
<accession>A4TI83</accession>
<dbReference type="EC" id="2.5.1.6" evidence="1"/>
<dbReference type="EMBL" id="CP000668">
    <property type="protein sequence ID" value="ABP38995.1"/>
    <property type="molecule type" value="Genomic_DNA"/>
</dbReference>
<dbReference type="RefSeq" id="WP_002209971.1">
    <property type="nucleotide sequence ID" value="NZ_CP009715.1"/>
</dbReference>
<dbReference type="SMR" id="A4TI83"/>
<dbReference type="GeneID" id="57973710"/>
<dbReference type="KEGG" id="ypp:YPDSF_0585"/>
<dbReference type="PATRIC" id="fig|386656.14.peg.1902"/>
<dbReference type="UniPathway" id="UPA00315">
    <property type="reaction ID" value="UER00080"/>
</dbReference>
<dbReference type="GO" id="GO:0005737">
    <property type="term" value="C:cytoplasm"/>
    <property type="evidence" value="ECO:0007669"/>
    <property type="project" value="UniProtKB-SubCell"/>
</dbReference>
<dbReference type="GO" id="GO:0005524">
    <property type="term" value="F:ATP binding"/>
    <property type="evidence" value="ECO:0007669"/>
    <property type="project" value="UniProtKB-UniRule"/>
</dbReference>
<dbReference type="GO" id="GO:0000287">
    <property type="term" value="F:magnesium ion binding"/>
    <property type="evidence" value="ECO:0007669"/>
    <property type="project" value="UniProtKB-UniRule"/>
</dbReference>
<dbReference type="GO" id="GO:0004478">
    <property type="term" value="F:methionine adenosyltransferase activity"/>
    <property type="evidence" value="ECO:0007669"/>
    <property type="project" value="UniProtKB-UniRule"/>
</dbReference>
<dbReference type="GO" id="GO:0006730">
    <property type="term" value="P:one-carbon metabolic process"/>
    <property type="evidence" value="ECO:0007669"/>
    <property type="project" value="UniProtKB-KW"/>
</dbReference>
<dbReference type="GO" id="GO:0006556">
    <property type="term" value="P:S-adenosylmethionine biosynthetic process"/>
    <property type="evidence" value="ECO:0007669"/>
    <property type="project" value="UniProtKB-UniRule"/>
</dbReference>
<dbReference type="CDD" id="cd18079">
    <property type="entry name" value="S-AdoMet_synt"/>
    <property type="match status" value="1"/>
</dbReference>
<dbReference type="FunFam" id="3.30.300.10:FF:000001">
    <property type="entry name" value="S-adenosylmethionine synthase"/>
    <property type="match status" value="1"/>
</dbReference>
<dbReference type="FunFam" id="3.30.300.10:FF:000003">
    <property type="entry name" value="S-adenosylmethionine synthase"/>
    <property type="match status" value="1"/>
</dbReference>
<dbReference type="Gene3D" id="3.30.300.10">
    <property type="match status" value="3"/>
</dbReference>
<dbReference type="HAMAP" id="MF_00086">
    <property type="entry name" value="S_AdoMet_synth1"/>
    <property type="match status" value="1"/>
</dbReference>
<dbReference type="InterPro" id="IPR022631">
    <property type="entry name" value="ADOMET_SYNTHASE_CS"/>
</dbReference>
<dbReference type="InterPro" id="IPR022630">
    <property type="entry name" value="S-AdoMet_synt_C"/>
</dbReference>
<dbReference type="InterPro" id="IPR022629">
    <property type="entry name" value="S-AdoMet_synt_central"/>
</dbReference>
<dbReference type="InterPro" id="IPR022628">
    <property type="entry name" value="S-AdoMet_synt_N"/>
</dbReference>
<dbReference type="InterPro" id="IPR002133">
    <property type="entry name" value="S-AdoMet_synthetase"/>
</dbReference>
<dbReference type="InterPro" id="IPR022636">
    <property type="entry name" value="S-AdoMet_synthetase_sfam"/>
</dbReference>
<dbReference type="NCBIfam" id="TIGR01034">
    <property type="entry name" value="metK"/>
    <property type="match status" value="1"/>
</dbReference>
<dbReference type="PANTHER" id="PTHR11964">
    <property type="entry name" value="S-ADENOSYLMETHIONINE SYNTHETASE"/>
    <property type="match status" value="1"/>
</dbReference>
<dbReference type="Pfam" id="PF02773">
    <property type="entry name" value="S-AdoMet_synt_C"/>
    <property type="match status" value="1"/>
</dbReference>
<dbReference type="Pfam" id="PF02772">
    <property type="entry name" value="S-AdoMet_synt_M"/>
    <property type="match status" value="1"/>
</dbReference>
<dbReference type="Pfam" id="PF00438">
    <property type="entry name" value="S-AdoMet_synt_N"/>
    <property type="match status" value="1"/>
</dbReference>
<dbReference type="PIRSF" id="PIRSF000497">
    <property type="entry name" value="MAT"/>
    <property type="match status" value="1"/>
</dbReference>
<dbReference type="SUPFAM" id="SSF55973">
    <property type="entry name" value="S-adenosylmethionine synthetase"/>
    <property type="match status" value="3"/>
</dbReference>
<dbReference type="PROSITE" id="PS00376">
    <property type="entry name" value="ADOMET_SYNTHASE_1"/>
    <property type="match status" value="1"/>
</dbReference>
<dbReference type="PROSITE" id="PS00377">
    <property type="entry name" value="ADOMET_SYNTHASE_2"/>
    <property type="match status" value="1"/>
</dbReference>
<feature type="chain" id="PRO_0000303004" description="S-adenosylmethionine synthase">
    <location>
        <begin position="1"/>
        <end position="384"/>
    </location>
</feature>
<feature type="region of interest" description="Flexible loop" evidence="1">
    <location>
        <begin position="99"/>
        <end position="109"/>
    </location>
</feature>
<feature type="binding site" description="in other chain" evidence="1">
    <location>
        <position position="15"/>
    </location>
    <ligand>
        <name>ATP</name>
        <dbReference type="ChEBI" id="CHEBI:30616"/>
        <note>ligand shared between two neighboring subunits</note>
    </ligand>
</feature>
<feature type="binding site" evidence="1">
    <location>
        <position position="17"/>
    </location>
    <ligand>
        <name>Mg(2+)</name>
        <dbReference type="ChEBI" id="CHEBI:18420"/>
    </ligand>
</feature>
<feature type="binding site" evidence="1">
    <location>
        <position position="43"/>
    </location>
    <ligand>
        <name>K(+)</name>
        <dbReference type="ChEBI" id="CHEBI:29103"/>
    </ligand>
</feature>
<feature type="binding site" description="in other chain" evidence="1">
    <location>
        <position position="56"/>
    </location>
    <ligand>
        <name>L-methionine</name>
        <dbReference type="ChEBI" id="CHEBI:57844"/>
        <note>ligand shared between two neighboring subunits</note>
    </ligand>
</feature>
<feature type="binding site" description="in other chain" evidence="1">
    <location>
        <position position="99"/>
    </location>
    <ligand>
        <name>L-methionine</name>
        <dbReference type="ChEBI" id="CHEBI:57844"/>
        <note>ligand shared between two neighboring subunits</note>
    </ligand>
</feature>
<feature type="binding site" description="in other chain" evidence="1">
    <location>
        <begin position="164"/>
        <end position="166"/>
    </location>
    <ligand>
        <name>ATP</name>
        <dbReference type="ChEBI" id="CHEBI:30616"/>
        <note>ligand shared between two neighboring subunits</note>
    </ligand>
</feature>
<feature type="binding site" description="in other chain" evidence="1">
    <location>
        <begin position="230"/>
        <end position="231"/>
    </location>
    <ligand>
        <name>ATP</name>
        <dbReference type="ChEBI" id="CHEBI:30616"/>
        <note>ligand shared between two neighboring subunits</note>
    </ligand>
</feature>
<feature type="binding site" evidence="1">
    <location>
        <position position="239"/>
    </location>
    <ligand>
        <name>ATP</name>
        <dbReference type="ChEBI" id="CHEBI:30616"/>
        <note>ligand shared between two neighboring subunits</note>
    </ligand>
</feature>
<feature type="binding site" evidence="1">
    <location>
        <position position="239"/>
    </location>
    <ligand>
        <name>L-methionine</name>
        <dbReference type="ChEBI" id="CHEBI:57844"/>
        <note>ligand shared between two neighboring subunits</note>
    </ligand>
</feature>
<feature type="binding site" description="in other chain" evidence="1">
    <location>
        <begin position="245"/>
        <end position="246"/>
    </location>
    <ligand>
        <name>ATP</name>
        <dbReference type="ChEBI" id="CHEBI:30616"/>
        <note>ligand shared between two neighboring subunits</note>
    </ligand>
</feature>
<feature type="binding site" evidence="1">
    <location>
        <position position="262"/>
    </location>
    <ligand>
        <name>ATP</name>
        <dbReference type="ChEBI" id="CHEBI:30616"/>
        <note>ligand shared between two neighboring subunits</note>
    </ligand>
</feature>
<feature type="binding site" evidence="1">
    <location>
        <position position="266"/>
    </location>
    <ligand>
        <name>ATP</name>
        <dbReference type="ChEBI" id="CHEBI:30616"/>
        <note>ligand shared between two neighboring subunits</note>
    </ligand>
</feature>
<feature type="binding site" description="in other chain" evidence="1">
    <location>
        <position position="270"/>
    </location>
    <ligand>
        <name>L-methionine</name>
        <dbReference type="ChEBI" id="CHEBI:57844"/>
        <note>ligand shared between two neighboring subunits</note>
    </ligand>
</feature>
<reference key="1">
    <citation type="submission" date="2007-02" db="EMBL/GenBank/DDBJ databases">
        <title>Complete sequence of chromosome of Yersinia pestis Pestoides F.</title>
        <authorList>
            <consortium name="US DOE Joint Genome Institute"/>
            <person name="Copeland A."/>
            <person name="Lucas S."/>
            <person name="Lapidus A."/>
            <person name="Barry K."/>
            <person name="Detter J.C."/>
            <person name="Glavina del Rio T."/>
            <person name="Hammon N."/>
            <person name="Israni S."/>
            <person name="Dalin E."/>
            <person name="Tice H."/>
            <person name="Pitluck S."/>
            <person name="Di Bartolo G."/>
            <person name="Chain P."/>
            <person name="Malfatti S."/>
            <person name="Shin M."/>
            <person name="Vergez L."/>
            <person name="Schmutz J."/>
            <person name="Larimer F."/>
            <person name="Land M."/>
            <person name="Hauser L."/>
            <person name="Worsham P."/>
            <person name="Chu M."/>
            <person name="Bearden S."/>
            <person name="Garcia E."/>
            <person name="Richardson P."/>
        </authorList>
    </citation>
    <scope>NUCLEOTIDE SEQUENCE [LARGE SCALE GENOMIC DNA]</scope>
    <source>
        <strain>Pestoides F</strain>
    </source>
</reference>
<gene>
    <name evidence="1" type="primary">metK</name>
    <name type="ordered locus">YPDSF_0585</name>
</gene>
<sequence length="384" mass="42020">MAKHLFTSESVSEGHPDKIADQISDAVLDAILEQDPKARVACETYVKTGMVLVGGEVTTNAWVDIEEITRRTIREIGYVHSDMGFDANSCAVLSAIGKQSPDINQGVDRENPLEQGAGDQGLMFGYATNETSVLMPAPITYAHRLVERQAEVRKNGALPWLRPDAKSQVTFQYDDGKIVGIDAVVLSTQHSEDINQKDLHEAVMEEIIKPVLPAEWITAHTKYFINPTGRFVIGGPMGDCGLTGRKIIVDTYGGMARHGGGAFSGKDPSKVDRSAAYAARYVAKNIVAAGLADRCEIQVSYAIGVAEPTSIMVEAFGTEKIPADQLTLLVREFFDLRPYGLIKMLDLLHPIYRETAAYGHFGREHFPWEKTDKAALLRDAAGLK</sequence>
<keyword id="KW-0067">ATP-binding</keyword>
<keyword id="KW-0963">Cytoplasm</keyword>
<keyword id="KW-0460">Magnesium</keyword>
<keyword id="KW-0479">Metal-binding</keyword>
<keyword id="KW-0547">Nucleotide-binding</keyword>
<keyword id="KW-0554">One-carbon metabolism</keyword>
<keyword id="KW-0630">Potassium</keyword>
<keyword id="KW-0808">Transferase</keyword>
<protein>
    <recommendedName>
        <fullName evidence="1">S-adenosylmethionine synthase</fullName>
        <shortName evidence="1">AdoMet synthase</shortName>
        <ecNumber evidence="1">2.5.1.6</ecNumber>
    </recommendedName>
    <alternativeName>
        <fullName evidence="1">MAT</fullName>
    </alternativeName>
    <alternativeName>
        <fullName evidence="1">Methionine adenosyltransferase</fullName>
    </alternativeName>
</protein>
<proteinExistence type="inferred from homology"/>
<evidence type="ECO:0000255" key="1">
    <source>
        <dbReference type="HAMAP-Rule" id="MF_00086"/>
    </source>
</evidence>